<organism>
    <name type="scientific">Mycoplasma pneumoniae (strain ATCC 29342 / M129 / Subtype 1)</name>
    <name type="common">Mycoplasmoides pneumoniae</name>
    <dbReference type="NCBI Taxonomy" id="272634"/>
    <lineage>
        <taxon>Bacteria</taxon>
        <taxon>Bacillati</taxon>
        <taxon>Mycoplasmatota</taxon>
        <taxon>Mycoplasmoidales</taxon>
        <taxon>Mycoplasmoidaceae</taxon>
        <taxon>Mycoplasmoides</taxon>
    </lineage>
</organism>
<comment type="function">
    <text evidence="1">Catalyzes both the ATP-dependent activation of exogenously supplied lipoate to lipoyl-AMP and the transfer of the activated lipoyl onto the lipoyl domains of lipoate-dependent enzymes.</text>
</comment>
<comment type="catalytic activity">
    <reaction>
        <text>L-lysyl-[lipoyl-carrier protein] + (R)-lipoate + ATP = N(6)-[(R)-lipoyl]-L-lysyl-[lipoyl-carrier protein] + AMP + diphosphate + H(+)</text>
        <dbReference type="Rhea" id="RHEA:49288"/>
        <dbReference type="Rhea" id="RHEA-COMP:10500"/>
        <dbReference type="Rhea" id="RHEA-COMP:10502"/>
        <dbReference type="ChEBI" id="CHEBI:15378"/>
        <dbReference type="ChEBI" id="CHEBI:29969"/>
        <dbReference type="ChEBI" id="CHEBI:30616"/>
        <dbReference type="ChEBI" id="CHEBI:33019"/>
        <dbReference type="ChEBI" id="CHEBI:83088"/>
        <dbReference type="ChEBI" id="CHEBI:83099"/>
        <dbReference type="ChEBI" id="CHEBI:456215"/>
        <dbReference type="EC" id="6.3.1.20"/>
    </reaction>
</comment>
<comment type="pathway">
    <text>Protein modification; protein lipoylation via exogenous pathway; protein N(6)-(lipoyl)lysine from lipoate: step 1/2.</text>
</comment>
<comment type="pathway">
    <text>Protein modification; protein lipoylation via exogenous pathway; protein N(6)-(lipoyl)lysine from lipoate: step 2/2.</text>
</comment>
<comment type="subcellular location">
    <subcellularLocation>
        <location evidence="1">Cytoplasm</location>
    </subcellularLocation>
</comment>
<comment type="miscellaneous">
    <text evidence="1">In the transfer reaction, the free carboxyl group of lipoic acid is attached via an amide linkage to the epsilon-amino group of a specific lysine residue of lipoyl domains of lipoate-dependent enzymes.</text>
</comment>
<comment type="similarity">
    <text evidence="3">Belongs to the LplA family.</text>
</comment>
<gene>
    <name type="primary">lplA</name>
    <name type="ordered locus">MPN_389</name>
    <name type="ORF">MP449</name>
</gene>
<keyword id="KW-0067">ATP-binding</keyword>
<keyword id="KW-0963">Cytoplasm</keyword>
<keyword id="KW-0436">Ligase</keyword>
<keyword id="KW-0547">Nucleotide-binding</keyword>
<keyword id="KW-1185">Reference proteome</keyword>
<protein>
    <recommendedName>
        <fullName>Probable lipoate-protein ligase A</fullName>
        <shortName>Lipoate--protein ligase</shortName>
        <ecNumber>6.3.1.20</ecNumber>
    </recommendedName>
</protein>
<proteinExistence type="inferred from homology"/>
<feature type="chain" id="PRO_0000209568" description="Probable lipoate-protein ligase A">
    <location>
        <begin position="1"/>
        <end position="339"/>
    </location>
</feature>
<feature type="domain" description="BPL/LPL catalytic" evidence="2">
    <location>
        <begin position="30"/>
        <end position="217"/>
    </location>
</feature>
<feature type="binding site" evidence="1">
    <location>
        <position position="72"/>
    </location>
    <ligand>
        <name>ATP</name>
        <dbReference type="ChEBI" id="CHEBI:30616"/>
    </ligand>
</feature>
<feature type="binding site" evidence="1">
    <location>
        <begin position="77"/>
        <end position="80"/>
    </location>
    <ligand>
        <name>ATP</name>
        <dbReference type="ChEBI" id="CHEBI:30616"/>
    </ligand>
</feature>
<feature type="binding site" evidence="1">
    <location>
        <position position="135"/>
    </location>
    <ligand>
        <name>(R)-lipoate</name>
        <dbReference type="ChEBI" id="CHEBI:83088"/>
    </ligand>
</feature>
<feature type="binding site" evidence="1">
    <location>
        <position position="135"/>
    </location>
    <ligand>
        <name>ATP</name>
        <dbReference type="ChEBI" id="CHEBI:30616"/>
    </ligand>
</feature>
<reference key="1">
    <citation type="journal article" date="1996" name="Nucleic Acids Res.">
        <title>Complete sequence analysis of the genome of the bacterium Mycoplasma pneumoniae.</title>
        <authorList>
            <person name="Himmelreich R."/>
            <person name="Hilbert H."/>
            <person name="Plagens H."/>
            <person name="Pirkl E."/>
            <person name="Li B.-C."/>
            <person name="Herrmann R."/>
        </authorList>
    </citation>
    <scope>NUCLEOTIDE SEQUENCE [LARGE SCALE GENOMIC DNA]</scope>
    <source>
        <strain>ATCC 29342 / M129 / Subtype 1</strain>
    </source>
</reference>
<name>LPLA_MYCPN</name>
<evidence type="ECO:0000250" key="1"/>
<evidence type="ECO:0000255" key="2">
    <source>
        <dbReference type="PROSITE-ProRule" id="PRU01067"/>
    </source>
</evidence>
<evidence type="ECO:0000305" key="3"/>
<dbReference type="EC" id="6.3.1.20"/>
<dbReference type="EMBL" id="U00089">
    <property type="protein sequence ID" value="AAB96097.1"/>
    <property type="molecule type" value="Genomic_DNA"/>
</dbReference>
<dbReference type="PIR" id="S73775">
    <property type="entry name" value="S73775"/>
</dbReference>
<dbReference type="RefSeq" id="NP_110077.1">
    <property type="nucleotide sequence ID" value="NC_000912.1"/>
</dbReference>
<dbReference type="RefSeq" id="WP_010874745.1">
    <property type="nucleotide sequence ID" value="NZ_OU342337.1"/>
</dbReference>
<dbReference type="SMR" id="P75394"/>
<dbReference type="STRING" id="272634.MPN_389"/>
<dbReference type="EnsemblBacteria" id="AAB96097">
    <property type="protein sequence ID" value="AAB96097"/>
    <property type="gene ID" value="MPN_389"/>
</dbReference>
<dbReference type="KEGG" id="mpn:MPN_389"/>
<dbReference type="PATRIC" id="fig|272634.6.peg.420"/>
<dbReference type="HOGENOM" id="CLU_022986_0_2_14"/>
<dbReference type="OrthoDB" id="9788148at2"/>
<dbReference type="BioCyc" id="MPNE272634:G1GJ3-616-MONOMER"/>
<dbReference type="UniPathway" id="UPA00537">
    <property type="reaction ID" value="UER00594"/>
</dbReference>
<dbReference type="UniPathway" id="UPA00537">
    <property type="reaction ID" value="UER00595"/>
</dbReference>
<dbReference type="Proteomes" id="UP000000808">
    <property type="component" value="Chromosome"/>
</dbReference>
<dbReference type="GO" id="GO:0005737">
    <property type="term" value="C:cytoplasm"/>
    <property type="evidence" value="ECO:0007669"/>
    <property type="project" value="UniProtKB-SubCell"/>
</dbReference>
<dbReference type="GO" id="GO:0005524">
    <property type="term" value="F:ATP binding"/>
    <property type="evidence" value="ECO:0007669"/>
    <property type="project" value="UniProtKB-KW"/>
</dbReference>
<dbReference type="GO" id="GO:0016979">
    <property type="term" value="F:lipoate-protein ligase activity"/>
    <property type="evidence" value="ECO:0007669"/>
    <property type="project" value="UniProtKB-EC"/>
</dbReference>
<dbReference type="GO" id="GO:0017118">
    <property type="term" value="F:lipoyltransferase activity"/>
    <property type="evidence" value="ECO:0007669"/>
    <property type="project" value="TreeGrafter"/>
</dbReference>
<dbReference type="GO" id="GO:0036211">
    <property type="term" value="P:protein modification process"/>
    <property type="evidence" value="ECO:0007669"/>
    <property type="project" value="InterPro"/>
</dbReference>
<dbReference type="CDD" id="cd16443">
    <property type="entry name" value="LplA"/>
    <property type="match status" value="1"/>
</dbReference>
<dbReference type="Gene3D" id="3.30.930.10">
    <property type="entry name" value="Bira Bifunctional Protein, Domain 2"/>
    <property type="match status" value="1"/>
</dbReference>
<dbReference type="Gene3D" id="3.30.390.50">
    <property type="entry name" value="CO dehydrogenase flavoprotein, C-terminal domain"/>
    <property type="match status" value="1"/>
</dbReference>
<dbReference type="InterPro" id="IPR045864">
    <property type="entry name" value="aa-tRNA-synth_II/BPL/LPL"/>
</dbReference>
<dbReference type="InterPro" id="IPR004143">
    <property type="entry name" value="BPL_LPL_catalytic"/>
</dbReference>
<dbReference type="InterPro" id="IPR019491">
    <property type="entry name" value="Lipoate_protein_ligase_C"/>
</dbReference>
<dbReference type="InterPro" id="IPR004562">
    <property type="entry name" value="LipoylTrfase_LipoateP_Ligase"/>
</dbReference>
<dbReference type="NCBIfam" id="TIGR00545">
    <property type="entry name" value="lipoyltrans"/>
    <property type="match status" value="1"/>
</dbReference>
<dbReference type="PANTHER" id="PTHR12561">
    <property type="entry name" value="LIPOATE-PROTEIN LIGASE"/>
    <property type="match status" value="1"/>
</dbReference>
<dbReference type="PANTHER" id="PTHR12561:SF3">
    <property type="entry name" value="LIPOYLTRANSFERASE 1, MITOCHONDRIAL"/>
    <property type="match status" value="1"/>
</dbReference>
<dbReference type="Pfam" id="PF10437">
    <property type="entry name" value="Lip_prot_lig_C"/>
    <property type="match status" value="1"/>
</dbReference>
<dbReference type="Pfam" id="PF21948">
    <property type="entry name" value="LplA-B_cat"/>
    <property type="match status" value="1"/>
</dbReference>
<dbReference type="SUPFAM" id="SSF55681">
    <property type="entry name" value="Class II aaRS and biotin synthetases"/>
    <property type="match status" value="1"/>
</dbReference>
<dbReference type="SUPFAM" id="SSF82649">
    <property type="entry name" value="SufE/NifU"/>
    <property type="match status" value="1"/>
</dbReference>
<dbReference type="PROSITE" id="PS51733">
    <property type="entry name" value="BPL_LPL_CATALYTIC"/>
    <property type="match status" value="1"/>
</dbReference>
<accession>P75394</accession>
<sequence length="339" mass="39194">MKTYILTSPKNIPYFNAALEEWLLTEFKKGEEIKVIYFWQNANTIVVGRNQNTYAEVNLSEVEKDKVNLFRRFSGGGAVFHDMGNICFSIILPKAKKEMENAYEETTRNVVKFLNSVGVPAQFHGRNDLEIEGKKFSGLAEYLSKDRVLVHGTLLFDTDFTKLAKYLNVDKTKMVSKGIESVQKRVVNVKEYLPNLSTPTFLEKMVQFFTETEHAETIHLDESSIKMVEKRAQEHFQSWDWNFGKTADYNFKNKKRFEGAGIFECNVQVDQGKVVDIKFYGDFLSVIDITPVTQQLVGQKYDYQTFAKILGNIDNFKEYFGTLTPQQMLEVIFDNKKDE</sequence>